<gene>
    <name type="primary">atpD</name>
    <name type="synonym">atpB</name>
    <name type="ordered locus">AM1_D0157</name>
</gene>
<organism>
    <name type="scientific">Acaryochloris marina (strain MBIC 11017)</name>
    <dbReference type="NCBI Taxonomy" id="329726"/>
    <lineage>
        <taxon>Bacteria</taxon>
        <taxon>Bacillati</taxon>
        <taxon>Cyanobacteriota</taxon>
        <taxon>Cyanophyceae</taxon>
        <taxon>Acaryochloridales</taxon>
        <taxon>Acaryochloridaceae</taxon>
        <taxon>Acaryochloris</taxon>
    </lineage>
</organism>
<sequence length="456" mass="49671">MVDVHFSDEVPPLRHLLRAGPQAQIAIEGLTYLSANLIRGIALTPTQGLARGARVIDTGQSLQVPIGEHLLGRAFNVFGDPIDGLGPLKGMKRSLHGQAVPLHQRTTGTDILVTGIKAIDLLAPLERGSKAGLFGGAGVGKTVLITEMIHNIVSRYDGVSIFCGIGERSREGEELYREMKAAGVLNNTVMVFGQMNEPPGSRFRVGHAALTMAEYFRDQAHRDVLLMIDNVFRFIQAGSEVSGLMGQLPSRVGYQPTLATELAELEERICSTAHGAITSVQAVYIPADDLTDPAAVHTFSHLSASIVLSRKRTSEGLYPAVDPLQSGSKMLTPSVVGQRHYQVAQAVRKTLAEYEDLKDIIAMLGLEELAQNERQTVYRARRLERFLTQPFFTTEQFSGIPGKMVSLDQTLTGCEAILDDKCSGLSEQALYMIGAVDEAELEHQEREAQEVEEIGQ</sequence>
<keyword id="KW-0066">ATP synthesis</keyword>
<keyword id="KW-0067">ATP-binding</keyword>
<keyword id="KW-0139">CF(1)</keyword>
<keyword id="KW-0375">Hydrogen ion transport</keyword>
<keyword id="KW-0406">Ion transport</keyword>
<keyword id="KW-0472">Membrane</keyword>
<keyword id="KW-0547">Nucleotide-binding</keyword>
<keyword id="KW-0614">Plasmid</keyword>
<keyword id="KW-1185">Reference proteome</keyword>
<keyword id="KW-0793">Thylakoid</keyword>
<keyword id="KW-1278">Translocase</keyword>
<keyword id="KW-0813">Transport</keyword>
<protein>
    <recommendedName>
        <fullName>ATP synthase subunit beta</fullName>
        <ecNumber>7.1.2.2</ecNumber>
    </recommendedName>
    <alternativeName>
        <fullName>ATP synthase F1 sector subunit beta</fullName>
    </alternativeName>
    <alternativeName>
        <fullName>F-ATPase subunit beta</fullName>
    </alternativeName>
</protein>
<reference key="1">
    <citation type="journal article" date="2008" name="Proc. Natl. Acad. Sci. U.S.A.">
        <title>Niche adaptation and genome expansion in the chlorophyll d-producing cyanobacterium Acaryochloris marina.</title>
        <authorList>
            <person name="Swingley W.D."/>
            <person name="Chen M."/>
            <person name="Cheung P.C."/>
            <person name="Conrad A.L."/>
            <person name="Dejesa L.C."/>
            <person name="Hao J."/>
            <person name="Honchak B.M."/>
            <person name="Karbach L.E."/>
            <person name="Kurdoglu A."/>
            <person name="Lahiri S."/>
            <person name="Mastrian S.D."/>
            <person name="Miyashita H."/>
            <person name="Page L."/>
            <person name="Ramakrishna P."/>
            <person name="Satoh S."/>
            <person name="Sattley W.M."/>
            <person name="Shimada Y."/>
            <person name="Taylor H.L."/>
            <person name="Tomo T."/>
            <person name="Tsuchiya T."/>
            <person name="Wang Z.T."/>
            <person name="Raymond J."/>
            <person name="Mimuro M."/>
            <person name="Blankenship R.E."/>
            <person name="Touchman J.W."/>
        </authorList>
    </citation>
    <scope>NUCLEOTIDE SEQUENCE [LARGE SCALE GENOMIC DNA]</scope>
    <source>
        <strain>MBIC 11017</strain>
    </source>
</reference>
<dbReference type="EC" id="7.1.2.2"/>
<dbReference type="EMBL" id="CP000841">
    <property type="protein sequence ID" value="ABW32652.1"/>
    <property type="molecule type" value="Genomic_DNA"/>
</dbReference>
<dbReference type="SMR" id="A8ZNR6"/>
<dbReference type="KEGG" id="amr:AM1_D0157"/>
<dbReference type="HOGENOM" id="CLU_022398_0_2_3"/>
<dbReference type="Proteomes" id="UP000000268">
    <property type="component" value="Plasmid pREB4"/>
</dbReference>
<dbReference type="GO" id="GO:0031676">
    <property type="term" value="C:plasma membrane-derived thylakoid membrane"/>
    <property type="evidence" value="ECO:0007669"/>
    <property type="project" value="UniProtKB-SubCell"/>
</dbReference>
<dbReference type="GO" id="GO:0045259">
    <property type="term" value="C:proton-transporting ATP synthase complex"/>
    <property type="evidence" value="ECO:0007669"/>
    <property type="project" value="UniProtKB-KW"/>
</dbReference>
<dbReference type="GO" id="GO:0005524">
    <property type="term" value="F:ATP binding"/>
    <property type="evidence" value="ECO:0007669"/>
    <property type="project" value="UniProtKB-UniRule"/>
</dbReference>
<dbReference type="GO" id="GO:0016887">
    <property type="term" value="F:ATP hydrolysis activity"/>
    <property type="evidence" value="ECO:0007669"/>
    <property type="project" value="InterPro"/>
</dbReference>
<dbReference type="GO" id="GO:0046933">
    <property type="term" value="F:proton-transporting ATP synthase activity, rotational mechanism"/>
    <property type="evidence" value="ECO:0007669"/>
    <property type="project" value="UniProtKB-UniRule"/>
</dbReference>
<dbReference type="GO" id="GO:0046961">
    <property type="term" value="F:proton-transporting ATPase activity, rotational mechanism"/>
    <property type="evidence" value="ECO:0007669"/>
    <property type="project" value="InterPro"/>
</dbReference>
<dbReference type="CDD" id="cd18110">
    <property type="entry name" value="ATP-synt_F1_beta_C"/>
    <property type="match status" value="1"/>
</dbReference>
<dbReference type="CDD" id="cd01133">
    <property type="entry name" value="F1-ATPase_beta_CD"/>
    <property type="match status" value="1"/>
</dbReference>
<dbReference type="FunFam" id="3.40.50.300:FF:001630">
    <property type="entry name" value="ATP synthase subunit beta"/>
    <property type="match status" value="1"/>
</dbReference>
<dbReference type="Gene3D" id="2.40.10.170">
    <property type="match status" value="1"/>
</dbReference>
<dbReference type="Gene3D" id="1.10.1140.10">
    <property type="entry name" value="Bovine Mitochondrial F1-atpase, Atp Synthase Beta Chain, Chain D, domain 3"/>
    <property type="match status" value="1"/>
</dbReference>
<dbReference type="Gene3D" id="3.40.50.300">
    <property type="entry name" value="P-loop containing nucleotide triphosphate hydrolases"/>
    <property type="match status" value="1"/>
</dbReference>
<dbReference type="HAMAP" id="MF_01347">
    <property type="entry name" value="ATP_synth_beta_bact"/>
    <property type="match status" value="1"/>
</dbReference>
<dbReference type="InterPro" id="IPR003593">
    <property type="entry name" value="AAA+_ATPase"/>
</dbReference>
<dbReference type="InterPro" id="IPR017691">
    <property type="entry name" value="Alt_ATPase_F1_bsu"/>
</dbReference>
<dbReference type="InterPro" id="IPR055190">
    <property type="entry name" value="ATP-synt_VA_C"/>
</dbReference>
<dbReference type="InterPro" id="IPR005722">
    <property type="entry name" value="ATP_synth_F1_bsu"/>
</dbReference>
<dbReference type="InterPro" id="IPR020003">
    <property type="entry name" value="ATPase_a/bsu_AS"/>
</dbReference>
<dbReference type="InterPro" id="IPR050053">
    <property type="entry name" value="ATPase_alpha/beta_chains"/>
</dbReference>
<dbReference type="InterPro" id="IPR036121">
    <property type="entry name" value="ATPase_F1/V1/A1_a/bsu_N_sf"/>
</dbReference>
<dbReference type="InterPro" id="IPR000194">
    <property type="entry name" value="ATPase_F1/V1/A1_a/bsu_nucl-bd"/>
</dbReference>
<dbReference type="InterPro" id="IPR024034">
    <property type="entry name" value="ATPase_F1/V1_b/a_C"/>
</dbReference>
<dbReference type="InterPro" id="IPR027417">
    <property type="entry name" value="P-loop_NTPase"/>
</dbReference>
<dbReference type="NCBIfam" id="TIGR03305">
    <property type="entry name" value="alt_F1F0_F1_bet"/>
    <property type="match status" value="1"/>
</dbReference>
<dbReference type="NCBIfam" id="TIGR01039">
    <property type="entry name" value="atpD"/>
    <property type="match status" value="1"/>
</dbReference>
<dbReference type="PANTHER" id="PTHR15184">
    <property type="entry name" value="ATP SYNTHASE"/>
    <property type="match status" value="1"/>
</dbReference>
<dbReference type="PANTHER" id="PTHR15184:SF71">
    <property type="entry name" value="ATP SYNTHASE SUBUNIT BETA, MITOCHONDRIAL"/>
    <property type="match status" value="1"/>
</dbReference>
<dbReference type="Pfam" id="PF00006">
    <property type="entry name" value="ATP-synt_ab"/>
    <property type="match status" value="1"/>
</dbReference>
<dbReference type="Pfam" id="PF22919">
    <property type="entry name" value="ATP-synt_VA_C"/>
    <property type="match status" value="1"/>
</dbReference>
<dbReference type="SMART" id="SM00382">
    <property type="entry name" value="AAA"/>
    <property type="match status" value="1"/>
</dbReference>
<dbReference type="SUPFAM" id="SSF47917">
    <property type="entry name" value="C-terminal domain of alpha and beta subunits of F1 ATP synthase"/>
    <property type="match status" value="1"/>
</dbReference>
<dbReference type="SUPFAM" id="SSF50615">
    <property type="entry name" value="N-terminal domain of alpha and beta subunits of F1 ATP synthase"/>
    <property type="match status" value="1"/>
</dbReference>
<dbReference type="SUPFAM" id="SSF52540">
    <property type="entry name" value="P-loop containing nucleoside triphosphate hydrolases"/>
    <property type="match status" value="1"/>
</dbReference>
<dbReference type="PROSITE" id="PS00152">
    <property type="entry name" value="ATPASE_ALPHA_BETA"/>
    <property type="match status" value="1"/>
</dbReference>
<geneLocation type="plasmid">
    <name>pREB4</name>
</geneLocation>
<name>ATPB_ACAM1</name>
<comment type="function">
    <text evidence="1">Produces ATP from ADP in the presence of a proton gradient across the membrane. The catalytic sites are hosted primarily by the beta subunits (By similarity).</text>
</comment>
<comment type="catalytic activity">
    <reaction>
        <text>ATP + H2O + 4 H(+)(in) = ADP + phosphate + 5 H(+)(out)</text>
        <dbReference type="Rhea" id="RHEA:57720"/>
        <dbReference type="ChEBI" id="CHEBI:15377"/>
        <dbReference type="ChEBI" id="CHEBI:15378"/>
        <dbReference type="ChEBI" id="CHEBI:30616"/>
        <dbReference type="ChEBI" id="CHEBI:43474"/>
        <dbReference type="ChEBI" id="CHEBI:456216"/>
        <dbReference type="EC" id="7.1.2.2"/>
    </reaction>
</comment>
<comment type="subunit">
    <text evidence="1">F-type ATPases have 2 components, CF(1) - the catalytic core - and CF(0) - the membrane proton channel. CF(1) has five subunits: alpha(3), beta(3), gamma(1), delta(1), epsilon(1). CF(0) has four main subunits: a(1), b(1), b'(1) and c(9-12) (By similarity).</text>
</comment>
<comment type="subcellular location">
    <subcellularLocation>
        <location evidence="1">Cellular thylakoid membrane</location>
        <topology evidence="1">Peripheral membrane protein</topology>
    </subcellularLocation>
</comment>
<comment type="similarity">
    <text evidence="2">Belongs to the ATPase alpha/beta chains family.</text>
</comment>
<feature type="chain" id="PRO_0000339466" description="ATP synthase subunit beta">
    <location>
        <begin position="1"/>
        <end position="456"/>
    </location>
</feature>
<feature type="binding site" evidence="1">
    <location>
        <begin position="135"/>
        <end position="142"/>
    </location>
    <ligand>
        <name>ATP</name>
        <dbReference type="ChEBI" id="CHEBI:30616"/>
    </ligand>
</feature>
<evidence type="ECO:0000250" key="1"/>
<evidence type="ECO:0000305" key="2"/>
<proteinExistence type="inferred from homology"/>
<accession>A8ZNR6</accession>